<organism>
    <name type="scientific">Vibrio cholerae serotype O1 (strain ATCC 39315 / El Tor Inaba N16961)</name>
    <dbReference type="NCBI Taxonomy" id="243277"/>
    <lineage>
        <taxon>Bacteria</taxon>
        <taxon>Pseudomonadati</taxon>
        <taxon>Pseudomonadota</taxon>
        <taxon>Gammaproteobacteria</taxon>
        <taxon>Vibrionales</taxon>
        <taxon>Vibrionaceae</taxon>
        <taxon>Vibrio</taxon>
    </lineage>
</organism>
<evidence type="ECO:0000250" key="1"/>
<evidence type="ECO:0000305" key="2"/>
<gene>
    <name type="primary">cysC</name>
    <name type="ordered locus">VC_2558</name>
</gene>
<protein>
    <recommendedName>
        <fullName>Adenylyl-sulfate kinase</fullName>
        <ecNumber>2.7.1.25</ecNumber>
    </recommendedName>
    <alternativeName>
        <fullName>APS kinase</fullName>
    </alternativeName>
    <alternativeName>
        <fullName>ATP adenosine-5'-phosphosulfate 3'-phosphotransferase</fullName>
    </alternativeName>
    <alternativeName>
        <fullName>Adenosine-5'-phosphosulfate kinase</fullName>
    </alternativeName>
</protein>
<name>CYSC_VIBCH</name>
<reference key="1">
    <citation type="journal article" date="2000" name="Nature">
        <title>DNA sequence of both chromosomes of the cholera pathogen Vibrio cholerae.</title>
        <authorList>
            <person name="Heidelberg J.F."/>
            <person name="Eisen J.A."/>
            <person name="Nelson W.C."/>
            <person name="Clayton R.A."/>
            <person name="Gwinn M.L."/>
            <person name="Dodson R.J."/>
            <person name="Haft D.H."/>
            <person name="Hickey E.K."/>
            <person name="Peterson J.D."/>
            <person name="Umayam L.A."/>
            <person name="Gill S.R."/>
            <person name="Nelson K.E."/>
            <person name="Read T.D."/>
            <person name="Tettelin H."/>
            <person name="Richardson D.L."/>
            <person name="Ermolaeva M.D."/>
            <person name="Vamathevan J.J."/>
            <person name="Bass S."/>
            <person name="Qin H."/>
            <person name="Dragoi I."/>
            <person name="Sellers P."/>
            <person name="McDonald L.A."/>
            <person name="Utterback T.R."/>
            <person name="Fleischmann R.D."/>
            <person name="Nierman W.C."/>
            <person name="White O."/>
            <person name="Salzberg S.L."/>
            <person name="Smith H.O."/>
            <person name="Colwell R.R."/>
            <person name="Mekalanos J.J."/>
            <person name="Venter J.C."/>
            <person name="Fraser C.M."/>
        </authorList>
    </citation>
    <scope>NUCLEOTIDE SEQUENCE [LARGE SCALE GENOMIC DNA]</scope>
    <source>
        <strain>ATCC 39315 / El Tor Inaba N16961</strain>
    </source>
</reference>
<feature type="chain" id="PRO_0000105923" description="Adenylyl-sulfate kinase">
    <location>
        <begin position="1"/>
        <end position="215"/>
    </location>
</feature>
<feature type="active site" description="Phosphoserine intermediate" evidence="1">
    <location>
        <position position="120"/>
    </location>
</feature>
<feature type="binding site" evidence="1">
    <location>
        <begin position="46"/>
        <end position="53"/>
    </location>
    <ligand>
        <name>ATP</name>
        <dbReference type="ChEBI" id="CHEBI:30616"/>
    </ligand>
</feature>
<keyword id="KW-0067">ATP-binding</keyword>
<keyword id="KW-0418">Kinase</keyword>
<keyword id="KW-0547">Nucleotide-binding</keyword>
<keyword id="KW-0597">Phosphoprotein</keyword>
<keyword id="KW-1185">Reference proteome</keyword>
<keyword id="KW-0808">Transferase</keyword>
<comment type="function">
    <text>Catalyzes the synthesis of activated sulfate.</text>
</comment>
<comment type="catalytic activity">
    <reaction>
        <text>adenosine 5'-phosphosulfate + ATP = 3'-phosphoadenylyl sulfate + ADP + H(+)</text>
        <dbReference type="Rhea" id="RHEA:24152"/>
        <dbReference type="ChEBI" id="CHEBI:15378"/>
        <dbReference type="ChEBI" id="CHEBI:30616"/>
        <dbReference type="ChEBI" id="CHEBI:58243"/>
        <dbReference type="ChEBI" id="CHEBI:58339"/>
        <dbReference type="ChEBI" id="CHEBI:456216"/>
        <dbReference type="EC" id="2.7.1.25"/>
    </reaction>
</comment>
<comment type="pathway">
    <text>Sulfur metabolism; hydrogen sulfide biosynthesis; sulfite from sulfate: step 2/3.</text>
</comment>
<comment type="similarity">
    <text evidence="2">Belongs to the APS kinase family.</text>
</comment>
<sequence length="215" mass="23906">MSKQADSLGFEQDAKPENVVWHRHAVDKAQRATLKQQRPAVLWFTGLSGAGKSTVAGALENRLAALGYHTYLLDGDNVRHGLCSDLGFSEQDRRENIRRIGELAKLMSDAGLIVLTAFISPHRAERQMVRDLLPNGEFLEVYVNTSLDVCEARDPKGLYKKARAGEIRQFTGIDSAYEAPLNPDIDLPAGEKSVDELVAQCLQALAERHIIQRWV</sequence>
<proteinExistence type="inferred from homology"/>
<accession>Q9KP21</accession>
<dbReference type="EC" id="2.7.1.25"/>
<dbReference type="EMBL" id="AE003852">
    <property type="protein sequence ID" value="AAF95699.1"/>
    <property type="molecule type" value="Genomic_DNA"/>
</dbReference>
<dbReference type="PIR" id="F82062">
    <property type="entry name" value="F82062"/>
</dbReference>
<dbReference type="RefSeq" id="NP_232186.1">
    <property type="nucleotide sequence ID" value="NC_002505.1"/>
</dbReference>
<dbReference type="RefSeq" id="WP_000043054.1">
    <property type="nucleotide sequence ID" value="NZ_LT906614.1"/>
</dbReference>
<dbReference type="SMR" id="Q9KP21"/>
<dbReference type="STRING" id="243277.VC_2558"/>
<dbReference type="DNASU" id="2615575"/>
<dbReference type="EnsemblBacteria" id="AAF95699">
    <property type="protein sequence ID" value="AAF95699"/>
    <property type="gene ID" value="VC_2558"/>
</dbReference>
<dbReference type="KEGG" id="vch:VC_2558"/>
<dbReference type="PATRIC" id="fig|243277.26.peg.2436"/>
<dbReference type="eggNOG" id="COG0529">
    <property type="taxonomic scope" value="Bacteria"/>
</dbReference>
<dbReference type="HOGENOM" id="CLU_046932_1_0_6"/>
<dbReference type="UniPathway" id="UPA00140">
    <property type="reaction ID" value="UER00205"/>
</dbReference>
<dbReference type="Proteomes" id="UP000000584">
    <property type="component" value="Chromosome 1"/>
</dbReference>
<dbReference type="GO" id="GO:0004020">
    <property type="term" value="F:adenylylsulfate kinase activity"/>
    <property type="evidence" value="ECO:0000318"/>
    <property type="project" value="GO_Central"/>
</dbReference>
<dbReference type="GO" id="GO:0005524">
    <property type="term" value="F:ATP binding"/>
    <property type="evidence" value="ECO:0007669"/>
    <property type="project" value="UniProtKB-UniRule"/>
</dbReference>
<dbReference type="GO" id="GO:0070814">
    <property type="term" value="P:hydrogen sulfide biosynthetic process"/>
    <property type="evidence" value="ECO:0007669"/>
    <property type="project" value="UniProtKB-UniRule"/>
</dbReference>
<dbReference type="GO" id="GO:0000103">
    <property type="term" value="P:sulfate assimilation"/>
    <property type="evidence" value="ECO:0000318"/>
    <property type="project" value="GO_Central"/>
</dbReference>
<dbReference type="CDD" id="cd02027">
    <property type="entry name" value="APSK"/>
    <property type="match status" value="1"/>
</dbReference>
<dbReference type="FunFam" id="3.40.50.300:FF:000212">
    <property type="entry name" value="Adenylyl-sulfate kinase"/>
    <property type="match status" value="1"/>
</dbReference>
<dbReference type="Gene3D" id="3.40.50.300">
    <property type="entry name" value="P-loop containing nucleotide triphosphate hydrolases"/>
    <property type="match status" value="1"/>
</dbReference>
<dbReference type="HAMAP" id="MF_00065">
    <property type="entry name" value="Adenylyl_sulf_kinase"/>
    <property type="match status" value="1"/>
</dbReference>
<dbReference type="InterPro" id="IPR002891">
    <property type="entry name" value="APS_kinase"/>
</dbReference>
<dbReference type="InterPro" id="IPR027417">
    <property type="entry name" value="P-loop_NTPase"/>
</dbReference>
<dbReference type="NCBIfam" id="TIGR00455">
    <property type="entry name" value="apsK"/>
    <property type="match status" value="1"/>
</dbReference>
<dbReference type="NCBIfam" id="NF003013">
    <property type="entry name" value="PRK03846.1"/>
    <property type="match status" value="1"/>
</dbReference>
<dbReference type="PANTHER" id="PTHR11055:SF63">
    <property type="entry name" value="ADENYLYL-SULFATE KINASE 1, CHLOROPLASTIC"/>
    <property type="match status" value="1"/>
</dbReference>
<dbReference type="PANTHER" id="PTHR11055">
    <property type="entry name" value="BIFUNCTIONAL 3'-PHOSPHOADENOSINE 5'-PHOSPHOSULFATE SYNTHASE"/>
    <property type="match status" value="1"/>
</dbReference>
<dbReference type="Pfam" id="PF01583">
    <property type="entry name" value="APS_kinase"/>
    <property type="match status" value="1"/>
</dbReference>
<dbReference type="SUPFAM" id="SSF52540">
    <property type="entry name" value="P-loop containing nucleoside triphosphate hydrolases"/>
    <property type="match status" value="1"/>
</dbReference>